<comment type="function">
    <text evidence="3">Part of a two-component antiporter that catalyzes the efflux of Na(+), Li(+) and K(+) in exchange for external protons. Shows a preference for Na(+), followed by K(+) and Li(+).</text>
</comment>
<comment type="biophysicochemical properties">
    <phDependence>
        <text evidence="3">Optimum pH is 9.0. Exhibits antiport activity at a wide pH range of 6.5 to 9.5.</text>
    </phDependence>
</comment>
<comment type="subunit">
    <text evidence="3">Heterodimer composed of UmpA and UmpB.</text>
</comment>
<comment type="subcellular location">
    <subcellularLocation>
        <location evidence="6">Cell membrane</location>
        <topology evidence="1">Multi-pass membrane protein</topology>
    </subcellularLocation>
</comment>
<comment type="similarity">
    <text evidence="5">Belongs to the UmpA/UmpB family.</text>
</comment>
<organism>
    <name type="scientific">Vreelandella zhaodongensis</name>
    <name type="common">Halomonas zhaodongensis</name>
    <dbReference type="NCBI Taxonomy" id="1176240"/>
    <lineage>
        <taxon>Bacteria</taxon>
        <taxon>Pseudomonadati</taxon>
        <taxon>Pseudomonadota</taxon>
        <taxon>Gammaproteobacteria</taxon>
        <taxon>Oceanospirillales</taxon>
        <taxon>Halomonadaceae</taxon>
        <taxon>Vreelandella</taxon>
    </lineage>
</organism>
<evidence type="ECO:0000255" key="1"/>
<evidence type="ECO:0000256" key="2">
    <source>
        <dbReference type="SAM" id="MobiDB-lite"/>
    </source>
</evidence>
<evidence type="ECO:0000269" key="3">
    <source>
    </source>
</evidence>
<evidence type="ECO:0000303" key="4">
    <source>
    </source>
</evidence>
<evidence type="ECO:0000305" key="5"/>
<evidence type="ECO:0000305" key="6">
    <source>
    </source>
</evidence>
<dbReference type="EMBL" id="KY241440">
    <property type="protein sequence ID" value="ARQ20735.1"/>
    <property type="molecule type" value="Genomic_DNA"/>
</dbReference>
<dbReference type="RefSeq" id="WP_162218445.1">
    <property type="nucleotide sequence ID" value="NZ_JACCDD010000001.1"/>
</dbReference>
<dbReference type="GO" id="GO:0005886">
    <property type="term" value="C:plasma membrane"/>
    <property type="evidence" value="ECO:0007669"/>
    <property type="project" value="UniProtKB-SubCell"/>
</dbReference>
<dbReference type="GO" id="GO:0015297">
    <property type="term" value="F:antiporter activity"/>
    <property type="evidence" value="ECO:0007669"/>
    <property type="project" value="UniProtKB-KW"/>
</dbReference>
<dbReference type="GO" id="GO:0006813">
    <property type="term" value="P:potassium ion transport"/>
    <property type="evidence" value="ECO:0007669"/>
    <property type="project" value="UniProtKB-KW"/>
</dbReference>
<dbReference type="GO" id="GO:0006814">
    <property type="term" value="P:sodium ion transport"/>
    <property type="evidence" value="ECO:0007669"/>
    <property type="project" value="UniProtKB-KW"/>
</dbReference>
<dbReference type="InterPro" id="IPR048123">
    <property type="entry name" value="NaLiK_antip_UmpB"/>
</dbReference>
<dbReference type="InterPro" id="IPR011435">
    <property type="entry name" value="UmpAB"/>
</dbReference>
<dbReference type="NCBIfam" id="NF041628">
    <property type="entry name" value="NaLiK_antip_UmpB"/>
    <property type="match status" value="1"/>
</dbReference>
<dbReference type="Pfam" id="PF07556">
    <property type="entry name" value="DUF1538"/>
    <property type="match status" value="1"/>
</dbReference>
<gene>
    <name evidence="4" type="primary">umpB</name>
</gene>
<protein>
    <recommendedName>
        <fullName evidence="5">Na(+), Li(+), K(+)/H(+) antiporter subunit B</fullName>
    </recommendedName>
    <alternativeName>
        <fullName evidence="5">Na(+) (Li(+)/K(+))/H(+) antiporter subunit B</fullName>
    </alternativeName>
</protein>
<sequence length="271" mass="29561">MILLTIFWDTLLDILPIAAIIFGFQYIVIRKRIQRLPQVLAGFFMVWVGLSLFLVGLEQALFPMGELMASQLTNTDFLPAVEQGVQRHWADYYWVYLFAFAIGASTTIAEPSLIAVSIKAGEISGGTINPFMLRIAVALGMAFGITLGTWRIVMGWPLQWFVFAAYCLVIIQTLRSPKSIIPLAFDSGGVTTSTITVPIIAALGLGLAASIPGRSALMDGFGMIALACLFPIITVMGYAQIAQWKDKRKQTTPHLSYSKAPPPSKGDNNAL</sequence>
<reference key="1">
    <citation type="journal article" date="2017" name="Sci. Rep.">
        <title>Characterization of a novel two-component Na+(Li+, K+)/H+ antiporter from Halomonas zhaodongensis.</title>
        <authorList>
            <person name="Meng L."/>
            <person name="Meng F."/>
            <person name="Zhang R."/>
            <person name="Zhang Z."/>
            <person name="Dong P."/>
            <person name="Sun K."/>
            <person name="Chen J."/>
            <person name="Zhang W."/>
            <person name="Yan M."/>
            <person name="Li J."/>
            <person name="Abdel-Motaal H."/>
            <person name="Jiang J."/>
        </authorList>
    </citation>
    <scope>NUCLEOTIDE SEQUENCE [GENOMIC DNA]</scope>
    <scope>FUNCTION</scope>
    <scope>BIOPHYSICOCHEMICAL PROPERTIES</scope>
    <scope>SUBUNIT</scope>
    <scope>SUBCELLULAR LOCATION</scope>
    <source>
        <strain>DSM 25869 / CGMCC 1.12286 / NEAU-ST10-25</strain>
    </source>
</reference>
<accession>A0A1X9QDU5</accession>
<proteinExistence type="evidence at protein level"/>
<feature type="chain" id="PRO_0000446279" description="Na(+), Li(+), K(+)/H(+) antiporter subunit B">
    <location>
        <begin position="1"/>
        <end position="271"/>
    </location>
</feature>
<feature type="transmembrane region" description="Helical" evidence="1">
    <location>
        <begin position="2"/>
        <end position="22"/>
    </location>
</feature>
<feature type="transmembrane region" description="Helical" evidence="1">
    <location>
        <begin position="36"/>
        <end position="56"/>
    </location>
</feature>
<feature type="transmembrane region" description="Helical" evidence="1">
    <location>
        <begin position="94"/>
        <end position="114"/>
    </location>
</feature>
<feature type="transmembrane region" description="Helical" evidence="1">
    <location>
        <begin position="130"/>
        <end position="150"/>
    </location>
</feature>
<feature type="transmembrane region" description="Helical" evidence="1">
    <location>
        <begin position="152"/>
        <end position="172"/>
    </location>
</feature>
<feature type="transmembrane region" description="Helical" evidence="1">
    <location>
        <begin position="193"/>
        <end position="213"/>
    </location>
</feature>
<feature type="transmembrane region" description="Helical" evidence="1">
    <location>
        <begin position="216"/>
        <end position="236"/>
    </location>
</feature>
<feature type="region of interest" description="Disordered" evidence="2">
    <location>
        <begin position="252"/>
        <end position="271"/>
    </location>
</feature>
<name>UMPB_VREZH</name>
<keyword id="KW-0050">Antiport</keyword>
<keyword id="KW-1003">Cell membrane</keyword>
<keyword id="KW-0406">Ion transport</keyword>
<keyword id="KW-0472">Membrane</keyword>
<keyword id="KW-0630">Potassium</keyword>
<keyword id="KW-0633">Potassium transport</keyword>
<keyword id="KW-0915">Sodium</keyword>
<keyword id="KW-0739">Sodium transport</keyword>
<keyword id="KW-0812">Transmembrane</keyword>
<keyword id="KW-1133">Transmembrane helix</keyword>
<keyword id="KW-0813">Transport</keyword>